<gene>
    <name type="primary">ROA3</name>
</gene>
<dbReference type="EC" id="3.6.4.12"/>
<dbReference type="EMBL" id="AF073331">
    <property type="protein sequence ID" value="AAD48087.1"/>
    <property type="molecule type" value="mRNA"/>
</dbReference>
<dbReference type="SMR" id="Q9SX03"/>
<dbReference type="FunCoup" id="Q9SX03">
    <property type="interactions" value="2966"/>
</dbReference>
<dbReference type="STRING" id="4577.Q9SX03"/>
<dbReference type="MaizeGDB" id="131629"/>
<dbReference type="InParanoid" id="Q9SX03"/>
<dbReference type="Proteomes" id="UP000007305">
    <property type="component" value="Unplaced"/>
</dbReference>
<dbReference type="ExpressionAtlas" id="Q9SX03">
    <property type="expression patterns" value="baseline and differential"/>
</dbReference>
<dbReference type="GO" id="GO:0042555">
    <property type="term" value="C:MCM complex"/>
    <property type="evidence" value="ECO:0000318"/>
    <property type="project" value="GO_Central"/>
</dbReference>
<dbReference type="GO" id="GO:0005634">
    <property type="term" value="C:nucleus"/>
    <property type="evidence" value="ECO:0000318"/>
    <property type="project" value="GO_Central"/>
</dbReference>
<dbReference type="GO" id="GO:0005524">
    <property type="term" value="F:ATP binding"/>
    <property type="evidence" value="ECO:0007669"/>
    <property type="project" value="UniProtKB-KW"/>
</dbReference>
<dbReference type="GO" id="GO:0016887">
    <property type="term" value="F:ATP hydrolysis activity"/>
    <property type="evidence" value="ECO:0007669"/>
    <property type="project" value="InterPro"/>
</dbReference>
<dbReference type="GO" id="GO:0004386">
    <property type="term" value="F:helicase activity"/>
    <property type="evidence" value="ECO:0007669"/>
    <property type="project" value="UniProtKB-KW"/>
</dbReference>
<dbReference type="GO" id="GO:0003697">
    <property type="term" value="F:single-stranded DNA binding"/>
    <property type="evidence" value="ECO:0000318"/>
    <property type="project" value="GO_Central"/>
</dbReference>
<dbReference type="GO" id="GO:0006271">
    <property type="term" value="P:DNA strand elongation involved in DNA replication"/>
    <property type="evidence" value="ECO:0000318"/>
    <property type="project" value="GO_Central"/>
</dbReference>
<dbReference type="GO" id="GO:0000727">
    <property type="term" value="P:double-strand break repair via break-induced replication"/>
    <property type="evidence" value="ECO:0000318"/>
    <property type="project" value="GO_Central"/>
</dbReference>
<dbReference type="GO" id="GO:1902975">
    <property type="term" value="P:mitotic DNA replication initiation"/>
    <property type="evidence" value="ECO:0000318"/>
    <property type="project" value="GO_Central"/>
</dbReference>
<dbReference type="CDD" id="cd17754">
    <property type="entry name" value="MCM3"/>
    <property type="match status" value="1"/>
</dbReference>
<dbReference type="FunFam" id="2.20.28.10:FF:000008">
    <property type="entry name" value="DNA helicase"/>
    <property type="match status" value="1"/>
</dbReference>
<dbReference type="FunFam" id="3.30.1640.10:FF:000012">
    <property type="entry name" value="DNA helicase"/>
    <property type="match status" value="1"/>
</dbReference>
<dbReference type="Gene3D" id="2.20.28.10">
    <property type="match status" value="1"/>
</dbReference>
<dbReference type="Gene3D" id="3.30.1640.10">
    <property type="entry name" value="mini-chromosome maintenance (MCM) complex, chain A, domain 1"/>
    <property type="match status" value="1"/>
</dbReference>
<dbReference type="Gene3D" id="2.40.50.140">
    <property type="entry name" value="Nucleic acid-binding proteins"/>
    <property type="match status" value="1"/>
</dbReference>
<dbReference type="Gene3D" id="3.40.50.300">
    <property type="entry name" value="P-loop containing nucleotide triphosphate hydrolases"/>
    <property type="match status" value="1"/>
</dbReference>
<dbReference type="InterPro" id="IPR003593">
    <property type="entry name" value="AAA+_ATPase"/>
</dbReference>
<dbReference type="InterPro" id="IPR031327">
    <property type="entry name" value="MCM"/>
</dbReference>
<dbReference type="InterPro" id="IPR008046">
    <property type="entry name" value="Mcm3"/>
</dbReference>
<dbReference type="InterPro" id="IPR018525">
    <property type="entry name" value="MCM_CS"/>
</dbReference>
<dbReference type="InterPro" id="IPR001208">
    <property type="entry name" value="MCM_dom"/>
</dbReference>
<dbReference type="InterPro" id="IPR041562">
    <property type="entry name" value="MCM_lid"/>
</dbReference>
<dbReference type="InterPro" id="IPR027925">
    <property type="entry name" value="MCM_N"/>
</dbReference>
<dbReference type="InterPro" id="IPR033762">
    <property type="entry name" value="MCM_OB"/>
</dbReference>
<dbReference type="InterPro" id="IPR012340">
    <property type="entry name" value="NA-bd_OB-fold"/>
</dbReference>
<dbReference type="InterPro" id="IPR027417">
    <property type="entry name" value="P-loop_NTPase"/>
</dbReference>
<dbReference type="InterPro" id="IPR056575">
    <property type="entry name" value="WH_MCM3_C"/>
</dbReference>
<dbReference type="PANTHER" id="PTHR11630">
    <property type="entry name" value="DNA REPLICATION LICENSING FACTOR MCM FAMILY MEMBER"/>
    <property type="match status" value="1"/>
</dbReference>
<dbReference type="PANTHER" id="PTHR11630:SF46">
    <property type="entry name" value="DNA REPLICATION LICENSING FACTOR MCM3-RELATED"/>
    <property type="match status" value="1"/>
</dbReference>
<dbReference type="Pfam" id="PF00493">
    <property type="entry name" value="MCM"/>
    <property type="match status" value="1"/>
</dbReference>
<dbReference type="Pfam" id="PF17855">
    <property type="entry name" value="MCM_lid"/>
    <property type="match status" value="1"/>
</dbReference>
<dbReference type="Pfam" id="PF14551">
    <property type="entry name" value="MCM_N"/>
    <property type="match status" value="1"/>
</dbReference>
<dbReference type="Pfam" id="PF17207">
    <property type="entry name" value="MCM_OB"/>
    <property type="match status" value="1"/>
</dbReference>
<dbReference type="Pfam" id="PF23191">
    <property type="entry name" value="WH_MCM3_C"/>
    <property type="match status" value="1"/>
</dbReference>
<dbReference type="PRINTS" id="PR01657">
    <property type="entry name" value="MCMFAMILY"/>
</dbReference>
<dbReference type="PRINTS" id="PR01659">
    <property type="entry name" value="MCMPROTEIN3"/>
</dbReference>
<dbReference type="SMART" id="SM00382">
    <property type="entry name" value="AAA"/>
    <property type="match status" value="1"/>
</dbReference>
<dbReference type="SMART" id="SM00350">
    <property type="entry name" value="MCM"/>
    <property type="match status" value="1"/>
</dbReference>
<dbReference type="SUPFAM" id="SSF50249">
    <property type="entry name" value="Nucleic acid-binding proteins"/>
    <property type="match status" value="1"/>
</dbReference>
<dbReference type="SUPFAM" id="SSF52540">
    <property type="entry name" value="P-loop containing nucleoside triphosphate hydrolases"/>
    <property type="match status" value="1"/>
</dbReference>
<dbReference type="PROSITE" id="PS00847">
    <property type="entry name" value="MCM_1"/>
    <property type="match status" value="1"/>
</dbReference>
<dbReference type="PROSITE" id="PS50051">
    <property type="entry name" value="MCM_2"/>
    <property type="match status" value="1"/>
</dbReference>
<proteinExistence type="evidence at transcript level"/>
<organism>
    <name type="scientific">Zea mays</name>
    <name type="common">Maize</name>
    <dbReference type="NCBI Taxonomy" id="4577"/>
    <lineage>
        <taxon>Eukaryota</taxon>
        <taxon>Viridiplantae</taxon>
        <taxon>Streptophyta</taxon>
        <taxon>Embryophyta</taxon>
        <taxon>Tracheophyta</taxon>
        <taxon>Spermatophyta</taxon>
        <taxon>Magnoliopsida</taxon>
        <taxon>Liliopsida</taxon>
        <taxon>Poales</taxon>
        <taxon>Poaceae</taxon>
        <taxon>PACMAD clade</taxon>
        <taxon>Panicoideae</taxon>
        <taxon>Andropogonodae</taxon>
        <taxon>Andropogoneae</taxon>
        <taxon>Tripsacinae</taxon>
        <taxon>Zea</taxon>
    </lineage>
</organism>
<evidence type="ECO:0000250" key="1"/>
<evidence type="ECO:0000255" key="2"/>
<evidence type="ECO:0000256" key="3">
    <source>
        <dbReference type="SAM" id="MobiDB-lite"/>
    </source>
</evidence>
<evidence type="ECO:0000305" key="4"/>
<protein>
    <recommendedName>
        <fullName>DNA replication licensing factor MCM3 homolog 3</fullName>
        <ecNumber>3.6.4.12</ecNumber>
    </recommendedName>
    <alternativeName>
        <fullName>Replication origin activator 3</fullName>
        <shortName>ROA-3</shortName>
    </alternativeName>
</protein>
<feature type="chain" id="PRO_0000292981" description="DNA replication licensing factor MCM3 homolog 3">
    <location>
        <begin position="1"/>
        <end position="768"/>
    </location>
</feature>
<feature type="domain" description="MCM">
    <location>
        <begin position="290"/>
        <end position="497"/>
    </location>
</feature>
<feature type="region of interest" description="Disordered" evidence="3">
    <location>
        <begin position="661"/>
        <end position="690"/>
    </location>
</feature>
<feature type="short sequence motif" description="Arginine finger">
    <location>
        <begin position="472"/>
        <end position="475"/>
    </location>
</feature>
<feature type="compositionally biased region" description="Basic and acidic residues" evidence="3">
    <location>
        <begin position="661"/>
        <end position="670"/>
    </location>
</feature>
<feature type="compositionally biased region" description="Gly residues" evidence="3">
    <location>
        <begin position="672"/>
        <end position="682"/>
    </location>
</feature>
<feature type="binding site" evidence="2">
    <location>
        <begin position="340"/>
        <end position="347"/>
    </location>
    <ligand>
        <name>ATP</name>
        <dbReference type="ChEBI" id="CHEBI:30616"/>
    </ligand>
</feature>
<reference key="1">
    <citation type="journal article" date="1999" name="J. Exp. Bot.">
        <title>cDNA and promoter sequences for MCM3 homologues from maize, and protein localization in cycling cells.</title>
        <authorList>
            <person name="Sabelli P.A."/>
            <person name="Parker J.S."/>
            <person name="Barlow P.W."/>
        </authorList>
    </citation>
    <scope>NUCLEOTIDE SEQUENCE [MRNA]</scope>
    <source>
        <strain>cv. LG11</strain>
        <tissue>Root</tissue>
    </source>
</reference>
<keyword id="KW-0067">ATP-binding</keyword>
<keyword id="KW-0131">Cell cycle</keyword>
<keyword id="KW-0235">DNA replication</keyword>
<keyword id="KW-0238">DNA-binding</keyword>
<keyword id="KW-0347">Helicase</keyword>
<keyword id="KW-0378">Hydrolase</keyword>
<keyword id="KW-0547">Nucleotide-binding</keyword>
<keyword id="KW-0539">Nucleus</keyword>
<keyword id="KW-1185">Reference proteome</keyword>
<sequence length="768" mass="85209">MEINEEAMAAHKRAFLDFLDQDVGKGVYMQAVRDMVQNKRHRLIIGMDDLRNHNLDLARRVIRTPGEYMQPASDAVSEVARNLDPKFLKEGERVMVGFSGPFGFHRVTPRDLMSSFIGTMVCVEGIVTKCSLVRPKVVKSVHFCPVTGDFLSREYRDITSFVGLPTGSVYPTRDDNGNLLVTEYGMCEYKDHQTLSMQEVPENSAPGQLPRTVDVIVEDDLVDCCKPGDRVSIVGVYKALPGKSKGSVSGVFRTVLIANNVSLLNKEANAPVYTREDLKRMKEISRRNDTFDLLGNSLAPSIYGHLWIKKAVVLLMLGGVEKNLKNGTHLRGDINMMMVGDPSVAKSQLLRAVMNIAPLAISTTGRGSSGVGLTAAVTSDQETGERRLEAGAMVLADRGVVCIDEFDKMNDQDRVAIHEVMEQQTVTIAKAGIHASLNARCSVIAAANPIYGTYDRSLTPTKNIGLPDSLLSRFDLLFIVLDQMDPEIDRQISEHVARMHRYCTDDGGARSLDKEGYAEEDDGDANAAIFVKYDRMLHGQDRRRGKKSKQDRLTVKFLKKYIHYAKNLIQPRLTDEASDHIATSYAELRDGSANAKSGGGTLPITARTLETIIRLSTAHAKMKLRHEVLKSDVEAALQVLNFAIYHKELTEMEEREQREMEMKQQADHDAGATGGTVDGHGSSGNDPMDVDVGSNDQNVSAERIQAFEALLGQHVLANHIDQMSIDEIEQMVNRESTAPYTRSQVEFILERMQDANRVMIRDGVVRII</sequence>
<name>MCM33_MAIZE</name>
<accession>Q9SX03</accession>
<comment type="function">
    <text evidence="1">Acts as a factor that allows the DNA to undergo a single round of replication per cell cycle. Required for DNA replication and cell proliferation (By similarity). May act as a component of the MCM complex which is the putative replicative helicase of the replication licensing system in eukaryotic cells.</text>
</comment>
<comment type="catalytic activity">
    <reaction>
        <text>ATP + H2O = ADP + phosphate + H(+)</text>
        <dbReference type="Rhea" id="RHEA:13065"/>
        <dbReference type="ChEBI" id="CHEBI:15377"/>
        <dbReference type="ChEBI" id="CHEBI:15378"/>
        <dbReference type="ChEBI" id="CHEBI:30616"/>
        <dbReference type="ChEBI" id="CHEBI:43474"/>
        <dbReference type="ChEBI" id="CHEBI:456216"/>
        <dbReference type="EC" id="3.6.4.12"/>
    </reaction>
</comment>
<comment type="subcellular location">
    <subcellularLocation>
        <location evidence="4">Nucleus</location>
    </subcellularLocation>
</comment>
<comment type="similarity">
    <text evidence="4">Belongs to the MCM family.</text>
</comment>